<gene>
    <name type="primary">pldA</name>
</gene>
<proteinExistence type="inferred from homology"/>
<name>PA1_PROVU</name>
<protein>
    <recommendedName>
        <fullName>Phospholipase A1</fullName>
        <ecNumber>3.1.1.32</ecNumber>
        <ecNumber>3.1.1.4</ecNumber>
    </recommendedName>
    <alternativeName>
        <fullName>Detergent-resistant phospholipase A</fullName>
        <shortName>DR-phospholipase A</shortName>
    </alternativeName>
    <alternativeName>
        <fullName>Outer membrane phospholipase A</fullName>
        <shortName>OM PLA</shortName>
    </alternativeName>
    <alternativeName>
        <fullName>Phosphatidylcholine 1-acylhydrolase</fullName>
    </alternativeName>
</protein>
<evidence type="ECO:0000250" key="1"/>
<evidence type="ECO:0000305" key="2"/>
<sequence length="289" mass="32945">MRTGPGWLLAAAALPFFACAQEATIDKVHDTPAVRGSIIANMLQEHDNPFTLYPYESNYLLYTYTSDLNKKAIESYNWSDNANKDEVKFQLSLAFPLWRGILGDNSLLGASYTQRSWWQLSNTGESAPFRETNYEPQLFLGFATDYSVGDWTLRDAEFGYNHQSNGRSDPTSRSWNRLYSRLMAQNGNWLVEVKPWYVIGDTSDNKNITKYMGYYQLKIGYQLGEAVLSAKGQYNWNTGYGGAELGVSYPITKHVRFYTQVYSGYGESLIDYDFNQTRVGMGVMLNDLF</sequence>
<feature type="signal peptide" evidence="1">
    <location>
        <begin position="1"/>
        <end position="20"/>
    </location>
</feature>
<feature type="chain" id="PRO_0000021987" description="Phospholipase A1">
    <location>
        <begin position="21"/>
        <end position="289"/>
    </location>
</feature>
<feature type="topological domain" description="Periplasmic" evidence="1">
    <location>
        <begin position="21"/>
        <end position="52"/>
    </location>
</feature>
<feature type="transmembrane region" description="Beta stranded" evidence="1">
    <location>
        <begin position="53"/>
        <end position="65"/>
    </location>
</feature>
<feature type="topological domain" description="Extracellular" evidence="1">
    <location>
        <begin position="66"/>
        <end position="84"/>
    </location>
</feature>
<feature type="transmembrane region" description="Beta stranded" evidence="1">
    <location>
        <begin position="85"/>
        <end position="99"/>
    </location>
</feature>
<feature type="topological domain" description="Periplasmic" evidence="1">
    <location>
        <begin position="100"/>
        <end position="105"/>
    </location>
</feature>
<feature type="transmembrane region" description="Beta stranded" evidence="1">
    <location>
        <begin position="106"/>
        <end position="118"/>
    </location>
</feature>
<feature type="topological domain" description="Extracellular" evidence="1">
    <location>
        <begin position="119"/>
        <end position="128"/>
    </location>
</feature>
<feature type="transmembrane region" description="Beta stranded" evidence="1">
    <location>
        <begin position="129"/>
        <end position="148"/>
    </location>
</feature>
<feature type="topological domain" description="Periplasmic" evidence="1">
    <location>
        <begin position="149"/>
        <end position="150"/>
    </location>
</feature>
<feature type="transmembrane region" description="Beta stranded" evidence="1">
    <location>
        <begin position="151"/>
        <end position="164"/>
    </location>
</feature>
<feature type="topological domain" description="Extracellular" evidence="1">
    <location>
        <begin position="165"/>
        <end position="173"/>
    </location>
</feature>
<feature type="transmembrane region" description="Beta stranded" evidence="1">
    <location>
        <begin position="174"/>
        <end position="186"/>
    </location>
</feature>
<feature type="topological domain" description="Periplasmic" evidence="1">
    <location>
        <begin position="187"/>
        <end position="188"/>
    </location>
</feature>
<feature type="transmembrane region" description="Beta stranded" evidence="1">
    <location>
        <begin position="189"/>
        <end position="198"/>
    </location>
</feature>
<feature type="topological domain" description="Extracellular" evidence="1">
    <location>
        <begin position="199"/>
        <end position="216"/>
    </location>
</feature>
<feature type="transmembrane region" description="Beta stranded" evidence="1">
    <location>
        <begin position="217"/>
        <end position="223"/>
    </location>
</feature>
<feature type="topological domain" description="Periplasmic" evidence="1">
    <location>
        <begin position="224"/>
        <end position="225"/>
    </location>
</feature>
<feature type="transmembrane region" description="Beta stranded" evidence="1">
    <location>
        <begin position="226"/>
        <end position="234"/>
    </location>
</feature>
<feature type="topological domain" description="Extracellular" evidence="1">
    <location>
        <begin position="235"/>
        <end position="241"/>
    </location>
</feature>
<feature type="transmembrane region" description="Beta stranded" evidence="1">
    <location>
        <begin position="242"/>
        <end position="250"/>
    </location>
</feature>
<feature type="topological domain" description="Periplasmic" evidence="1">
    <location>
        <begin position="251"/>
        <end position="255"/>
    </location>
</feature>
<feature type="transmembrane region" description="Beta stranded" evidence="1">
    <location>
        <begin position="256"/>
        <end position="265"/>
    </location>
</feature>
<feature type="topological domain" description="Extracellular" evidence="1">
    <location>
        <begin position="266"/>
        <end position="274"/>
    </location>
</feature>
<feature type="transmembrane region" description="Beta stranded" evidence="1">
    <location>
        <begin position="275"/>
        <end position="286"/>
    </location>
</feature>
<feature type="topological domain" description="Periplasmic" evidence="1">
    <location>
        <begin position="287"/>
        <end position="289"/>
    </location>
</feature>
<feature type="active site" description="Proton acceptor" evidence="1">
    <location>
        <position position="162"/>
    </location>
</feature>
<feature type="active site" description="Nucleophile" evidence="1">
    <location>
        <position position="164"/>
    </location>
</feature>
<feature type="binding site" description="in dimeric form" evidence="1">
    <location>
        <position position="126"/>
    </location>
    <ligand>
        <name>Ca(2+)</name>
        <dbReference type="ChEBI" id="CHEBI:29108"/>
        <label>1</label>
    </ligand>
</feature>
<feature type="binding site" description="in dimeric form" evidence="1">
    <location>
        <position position="167"/>
    </location>
    <ligand>
        <name>Ca(2+)</name>
        <dbReference type="ChEBI" id="CHEBI:29108"/>
        <label>2</label>
    </ligand>
</feature>
<feature type="binding site" description="in dimeric form" evidence="1">
    <location>
        <position position="172"/>
    </location>
    <ligand>
        <name>Ca(2+)</name>
        <dbReference type="ChEBI" id="CHEBI:29108"/>
        <label>2</label>
    </ligand>
</feature>
<feature type="binding site" description="in monomeric form" evidence="1">
    <location>
        <position position="204"/>
    </location>
    <ligand>
        <name>Ca(2+)</name>
        <dbReference type="ChEBI" id="CHEBI:29108"/>
        <label>3</label>
    </ligand>
</feature>
<reference key="1">
    <citation type="journal article" date="1994" name="J. Bacteriol.">
        <title>Molecular characterization of enterobacterial pldA genes encoding outer membrane phospholipase A.</title>
        <authorList>
            <person name="Brok R.G.P.M."/>
            <person name="Brinkman E."/>
            <person name="van Boxtel R."/>
            <person name="Bekkers A.C.A.P."/>
            <person name="Verheij H.M."/>
            <person name="Tommassen J."/>
        </authorList>
    </citation>
    <scope>NUCLEOTIDE SEQUENCE [GENOMIC DNA]</scope>
</reference>
<organism>
    <name type="scientific">Proteus vulgaris</name>
    <dbReference type="NCBI Taxonomy" id="585"/>
    <lineage>
        <taxon>Bacteria</taxon>
        <taxon>Pseudomonadati</taxon>
        <taxon>Pseudomonadota</taxon>
        <taxon>Gammaproteobacteria</taxon>
        <taxon>Enterobacterales</taxon>
        <taxon>Morganellaceae</taxon>
        <taxon>Proteus</taxon>
    </lineage>
</organism>
<accession>P37447</accession>
<comment type="function">
    <text evidence="1">Hydrolysis of phosphatidylcholine with phospholipase A2 (EC 3.1.1.4) and phospholipase A1 (EC 3.1.1.32) activities.</text>
</comment>
<comment type="catalytic activity">
    <reaction>
        <text>a 1,2-diacyl-sn-glycero-3-phosphocholine + H2O = a 2-acyl-sn-glycero-3-phosphocholine + a fatty acid + H(+)</text>
        <dbReference type="Rhea" id="RHEA:18689"/>
        <dbReference type="ChEBI" id="CHEBI:15377"/>
        <dbReference type="ChEBI" id="CHEBI:15378"/>
        <dbReference type="ChEBI" id="CHEBI:28868"/>
        <dbReference type="ChEBI" id="CHEBI:57643"/>
        <dbReference type="ChEBI" id="CHEBI:57875"/>
        <dbReference type="EC" id="3.1.1.32"/>
    </reaction>
</comment>
<comment type="catalytic activity">
    <reaction>
        <text>a 1,2-diacyl-sn-glycero-3-phosphocholine + H2O = a 1-acyl-sn-glycero-3-phosphocholine + a fatty acid + H(+)</text>
        <dbReference type="Rhea" id="RHEA:15801"/>
        <dbReference type="ChEBI" id="CHEBI:15377"/>
        <dbReference type="ChEBI" id="CHEBI:15378"/>
        <dbReference type="ChEBI" id="CHEBI:28868"/>
        <dbReference type="ChEBI" id="CHEBI:57643"/>
        <dbReference type="ChEBI" id="CHEBI:58168"/>
        <dbReference type="EC" id="3.1.1.4"/>
    </reaction>
</comment>
<comment type="cofactor">
    <cofactor evidence="1">
        <name>Ca(2+)</name>
        <dbReference type="ChEBI" id="CHEBI:29108"/>
    </cofactor>
    <text evidence="1">Binds 1 Ca(2+) ion per monomer. In the dimeric form the Ca(2+) is bound by different amino acids with binding of each Ca(2+) shared with ligands coming from each monomer. The Ca(2+) ion may have a role in catalysis.</text>
</comment>
<comment type="subunit">
    <text evidence="1">Homodimer; dimerization is reversible, and the dimeric form is the active one.</text>
</comment>
<comment type="subcellular location">
    <subcellularLocation>
        <location evidence="1">Cell outer membrane</location>
        <topology evidence="1">Multi-pass membrane protein</topology>
    </subcellularLocation>
    <text evidence="1">One of the very few enzymes located there.</text>
</comment>
<comment type="similarity">
    <text evidence="2">Belongs to the phospholipase A1 family.</text>
</comment>
<keyword id="KW-0106">Calcium</keyword>
<keyword id="KW-0998">Cell outer membrane</keyword>
<keyword id="KW-0378">Hydrolase</keyword>
<keyword id="KW-0442">Lipid degradation</keyword>
<keyword id="KW-0443">Lipid metabolism</keyword>
<keyword id="KW-0472">Membrane</keyword>
<keyword id="KW-0479">Metal-binding</keyword>
<keyword id="KW-0732">Signal</keyword>
<keyword id="KW-0812">Transmembrane</keyword>
<keyword id="KW-1134">Transmembrane beta strand</keyword>
<dbReference type="EC" id="3.1.1.32"/>
<dbReference type="EC" id="3.1.1.4"/>
<dbReference type="EMBL" id="X76902">
    <property type="protein sequence ID" value="CAA54224.1"/>
    <property type="molecule type" value="Genomic_DNA"/>
</dbReference>
<dbReference type="PIR" id="C36971">
    <property type="entry name" value="C36971"/>
</dbReference>
<dbReference type="SMR" id="P37447"/>
<dbReference type="GO" id="GO:0009279">
    <property type="term" value="C:cell outer membrane"/>
    <property type="evidence" value="ECO:0007669"/>
    <property type="project" value="UniProtKB-SubCell"/>
</dbReference>
<dbReference type="GO" id="GO:0005509">
    <property type="term" value="F:calcium ion binding"/>
    <property type="evidence" value="ECO:0007669"/>
    <property type="project" value="TreeGrafter"/>
</dbReference>
<dbReference type="GO" id="GO:0008970">
    <property type="term" value="F:phospholipase A1 activity"/>
    <property type="evidence" value="ECO:0007669"/>
    <property type="project" value="UniProtKB-EC"/>
</dbReference>
<dbReference type="GO" id="GO:0004623">
    <property type="term" value="F:phospholipase A2 activity"/>
    <property type="evidence" value="ECO:0007669"/>
    <property type="project" value="UniProtKB-EC"/>
</dbReference>
<dbReference type="GO" id="GO:0016042">
    <property type="term" value="P:lipid catabolic process"/>
    <property type="evidence" value="ECO:0007669"/>
    <property type="project" value="UniProtKB-KW"/>
</dbReference>
<dbReference type="CDD" id="cd00541">
    <property type="entry name" value="OMPLA"/>
    <property type="match status" value="1"/>
</dbReference>
<dbReference type="Gene3D" id="2.40.230.10">
    <property type="entry name" value="Phospholipase A1"/>
    <property type="match status" value="1"/>
</dbReference>
<dbReference type="InterPro" id="IPR003187">
    <property type="entry name" value="PLipase_A1"/>
</dbReference>
<dbReference type="InterPro" id="IPR036541">
    <property type="entry name" value="PLipase_A1_sf"/>
</dbReference>
<dbReference type="NCBIfam" id="NF008031">
    <property type="entry name" value="PRK10763.1"/>
    <property type="match status" value="1"/>
</dbReference>
<dbReference type="PANTHER" id="PTHR40457">
    <property type="entry name" value="PHOSPHOLIPASE A1"/>
    <property type="match status" value="1"/>
</dbReference>
<dbReference type="PANTHER" id="PTHR40457:SF1">
    <property type="entry name" value="PHOSPHOLIPASE A1"/>
    <property type="match status" value="1"/>
</dbReference>
<dbReference type="Pfam" id="PF02253">
    <property type="entry name" value="PLA1"/>
    <property type="match status" value="1"/>
</dbReference>
<dbReference type="PRINTS" id="PR01486">
    <property type="entry name" value="PHPHLIPASEA1"/>
</dbReference>
<dbReference type="SUPFAM" id="SSF56931">
    <property type="entry name" value="Outer membrane phospholipase A (OMPLA)"/>
    <property type="match status" value="1"/>
</dbReference>